<organismHost>
    <name type="scientific">Bromus inermis</name>
    <name type="common">Smooth brome grass</name>
    <name type="synonym">Bromopsis inermis</name>
    <dbReference type="NCBI Taxonomy" id="15371"/>
</organismHost>
<sequence>MSSKTWDDDFVRQVPSFQWIIDQSLEDEVEAASLQVQEPADGVAIDGSLASFKLAIAPLEIGGVFDPPFDRVRWGSICDTVQQMVQQFTDRPLIPQAEMARMLYLDIPGSFVLEDEIDDWYPEDTSDGYGVSFAADEDHASDLKLASDSSNCEIEEVRVTGDTPKELTLGDRYMGIDEEFQTTNTDYDITLQIMNPIEHRVSRVIDTHCHPDNPDISTGPIYMERVSLARTEATSHSILPTHAYFDDSYHQALVENGDYSMDFDRIRLKQSDVDWYRDPDKYFQPKMNIGSAQRRVGTQKEVLTALKKRNADVPEMGDAINMKDTAKAIAKRFRSTFLNVDGEDCLRASMDVMTKCLEYHKKWGKHMDLQGVNVAAETDLCRYQHMLKSDVKPVVTDTLHLERAVAATITFHSKGVTSNFSPFFTACFEKLSLALKSRFIVPIGKISSLELKNVRLNNRYFLEADLSKFDKSQGELHLEFQREILLALGFPAPLTNWWSDFHRDSYLSDPHAKVGMSVSFQRRTGDAFTYFGNTLVTMAMIAYASDLSDCDCAIFSGDDSLIISKVKPVLDTDMFTSLFNMEIKVMDPSVPYVCSKFLVETEMGNLVSVPDPLREIQRLAKRKILRDEQMLRAHFVSFCDRMKFINQLDEKMITTLCHFVYLKYGKEKPWIFEEVRAALAAFSLYSENFLRFSDCYCTEGIRVYQMSDPVCKFKRTTEERKTDGDWFHNWKNPKFPGVLDKVYRTIGIYSSDCSTKELPVKRIGRLHEALERESLKLANDRRTTQRLKKKVDDYATGRGGLTSVDALLVKSHCETFKPSDLR</sequence>
<keyword id="KW-0547">Nucleotide-binding</keyword>
<keyword id="KW-0548">Nucleotidyltransferase</keyword>
<keyword id="KW-1185">Reference proteome</keyword>
<keyword id="KW-0696">RNA-directed RNA polymerase</keyword>
<keyword id="KW-0808">Transferase</keyword>
<keyword id="KW-0693">Viral RNA replication</keyword>
<name>RDRP_BMV</name>
<evidence type="ECO:0000255" key="1">
    <source>
        <dbReference type="PROSITE-ProRule" id="PRU00539"/>
    </source>
</evidence>
<evidence type="ECO:0000269" key="2">
    <source>
    </source>
</evidence>
<evidence type="ECO:0000305" key="3"/>
<comment type="function">
    <text evidence="3">RNA-dependent RNA polymerase which replicates the viral genome composed of 3 RNA segments, RNA1, RNA2 and RNA3.</text>
</comment>
<comment type="catalytic activity">
    <reaction evidence="1">
        <text>RNA(n) + a ribonucleoside 5'-triphosphate = RNA(n+1) + diphosphate</text>
        <dbReference type="Rhea" id="RHEA:21248"/>
        <dbReference type="Rhea" id="RHEA-COMP:14527"/>
        <dbReference type="Rhea" id="RHEA-COMP:17342"/>
        <dbReference type="ChEBI" id="CHEBI:33019"/>
        <dbReference type="ChEBI" id="CHEBI:61557"/>
        <dbReference type="ChEBI" id="CHEBI:140395"/>
        <dbReference type="EC" id="2.7.7.48"/>
    </reaction>
</comment>
<comment type="subunit">
    <text evidence="2">Interacts with replication protein 1a.</text>
</comment>
<comment type="interaction">
    <interactant intactId="EBI-15874357">
        <id>P03594</id>
    </interactant>
    <interactant intactId="EBI-15874242">
        <id>P03588</id>
        <label>ORF1a</label>
    </interactant>
    <organismsDiffer>false</organismsDiffer>
    <experiments>2</experiments>
</comment>
<comment type="similarity">
    <text evidence="3">Belongs to the ssRNA positive-strand viruses RNA-directed RNA polymerase family.</text>
</comment>
<reference key="1">
    <citation type="journal article" date="1984" name="J. Mol. Biol.">
        <title>Nucleotide sequence of the brome mosaic virus genome and its implications for viral replication.</title>
        <authorList>
            <person name="Ahlquist P."/>
            <person name="Dasgupta R."/>
            <person name="Kaesberg P."/>
        </authorList>
    </citation>
    <scope>NUCLEOTIDE SEQUENCE</scope>
</reference>
<reference key="2">
    <citation type="journal article" date="2009" name="PLoS Pathog.">
        <title>An amphipathic alpha-helix controls multiple roles of brome mosaic virus protein 1a in RNA replication complex assembly and function.</title>
        <authorList>
            <person name="Liu L."/>
            <person name="Westler W.M."/>
            <person name="den Boon J.A."/>
            <person name="Wang X."/>
            <person name="Diaz A."/>
            <person name="Steinberg H.A."/>
            <person name="Ahlquist P."/>
        </authorList>
    </citation>
    <scope>INTERACTION WITH REPLICATION PROTEIN 1A</scope>
</reference>
<gene>
    <name type="ORF">ORF2a</name>
</gene>
<protein>
    <recommendedName>
        <fullName>RNA-directed RNA polymerase 2a</fullName>
        <shortName>protein 2a</shortName>
        <ecNumber>2.7.7.48</ecNumber>
    </recommendedName>
</protein>
<proteinExistence type="evidence at protein level"/>
<accession>P03594</accession>
<feature type="chain" id="PRO_0000083269" description="RNA-directed RNA polymerase 2a">
    <location>
        <begin position="1"/>
        <end position="822"/>
    </location>
</feature>
<feature type="domain" description="RdRp catalytic" evidence="1">
    <location>
        <begin position="459"/>
        <end position="572"/>
    </location>
</feature>
<dbReference type="EC" id="2.7.7.48"/>
<dbReference type="EMBL" id="X01678">
    <property type="protein sequence ID" value="CAA25834.1"/>
    <property type="molecule type" value="Unassigned_RNA"/>
</dbReference>
<dbReference type="PIR" id="A04202">
    <property type="entry name" value="P2BVA"/>
</dbReference>
<dbReference type="RefSeq" id="NP_041197.1">
    <property type="nucleotide sequence ID" value="NC_002027.1"/>
</dbReference>
<dbReference type="DIP" id="DIP-59379N"/>
<dbReference type="IntAct" id="P03594">
    <property type="interactions" value="1"/>
</dbReference>
<dbReference type="KEGG" id="vg:962145"/>
<dbReference type="OrthoDB" id="1928at10239"/>
<dbReference type="Proteomes" id="UP000001649">
    <property type="component" value="Genome"/>
</dbReference>
<dbReference type="GO" id="GO:0030430">
    <property type="term" value="C:host cell cytoplasm"/>
    <property type="evidence" value="ECO:0000314"/>
    <property type="project" value="UniProtKB"/>
</dbReference>
<dbReference type="GO" id="GO:0000166">
    <property type="term" value="F:nucleotide binding"/>
    <property type="evidence" value="ECO:0007669"/>
    <property type="project" value="UniProtKB-KW"/>
</dbReference>
<dbReference type="GO" id="GO:0003723">
    <property type="term" value="F:RNA binding"/>
    <property type="evidence" value="ECO:0007669"/>
    <property type="project" value="InterPro"/>
</dbReference>
<dbReference type="GO" id="GO:0003968">
    <property type="term" value="F:RNA-directed RNA polymerase activity"/>
    <property type="evidence" value="ECO:0007669"/>
    <property type="project" value="UniProtKB-KW"/>
</dbReference>
<dbReference type="GO" id="GO:0006351">
    <property type="term" value="P:DNA-templated transcription"/>
    <property type="evidence" value="ECO:0007669"/>
    <property type="project" value="InterPro"/>
</dbReference>
<dbReference type="GO" id="GO:0039690">
    <property type="term" value="P:positive stranded viral RNA replication"/>
    <property type="evidence" value="ECO:0000314"/>
    <property type="project" value="UniProtKB"/>
</dbReference>
<dbReference type="CDD" id="cd23252">
    <property type="entry name" value="Bromoviridae_RdRp"/>
    <property type="match status" value="1"/>
</dbReference>
<dbReference type="InterPro" id="IPR007610">
    <property type="entry name" value="BBMV_Gp1_N"/>
</dbReference>
<dbReference type="InterPro" id="IPR047309">
    <property type="entry name" value="Bromoviridae_RdRp"/>
</dbReference>
<dbReference type="InterPro" id="IPR043502">
    <property type="entry name" value="DNA/RNA_pol_sf"/>
</dbReference>
<dbReference type="InterPro" id="IPR018228">
    <property type="entry name" value="DNase_TatD-rel_CS"/>
</dbReference>
<dbReference type="InterPro" id="IPR001788">
    <property type="entry name" value="RNA-dep_RNA_pol_alsuvir"/>
</dbReference>
<dbReference type="InterPro" id="IPR007094">
    <property type="entry name" value="RNA-dir_pol_PSvirus"/>
</dbReference>
<dbReference type="Pfam" id="PF04522">
    <property type="entry name" value="BBMV_Gp1_N"/>
    <property type="match status" value="1"/>
</dbReference>
<dbReference type="Pfam" id="PF00978">
    <property type="entry name" value="RdRP_2"/>
    <property type="match status" value="1"/>
</dbReference>
<dbReference type="SUPFAM" id="SSF56672">
    <property type="entry name" value="DNA/RNA polymerases"/>
    <property type="match status" value="1"/>
</dbReference>
<dbReference type="PROSITE" id="PS50507">
    <property type="entry name" value="RDRP_SSRNA_POS"/>
    <property type="match status" value="1"/>
</dbReference>
<organism>
    <name type="scientific">Brome mosaic virus</name>
    <name type="common">BMV</name>
    <dbReference type="NCBI Taxonomy" id="12302"/>
    <lineage>
        <taxon>Viruses</taxon>
        <taxon>Riboviria</taxon>
        <taxon>Orthornavirae</taxon>
        <taxon>Kitrinoviricota</taxon>
        <taxon>Alsuviricetes</taxon>
        <taxon>Martellivirales</taxon>
        <taxon>Bromoviridae</taxon>
        <taxon>Bromovirus</taxon>
    </lineage>
</organism>